<sequence>MCTARTAEEIFVETIAVKTRILNDRVLLEAARAIGDRLIAGYRAGARVFMCGNGGSAADAQHFAAELTGHLIFDRPPLGAEALHANSSHLTAVANDYDYDTVFARALEGSARPGDTLFAISTSGNSMSVLRAAKTARELGVTVVAMTGESGGQLAEFADFLINVPSRDTGRIQESHIVFIHAISEHVEHALFAPRQ</sequence>
<dbReference type="EC" id="5.3.1.28" evidence="1"/>
<dbReference type="EMBL" id="AE000516">
    <property type="protein sequence ID" value="AAK44345.1"/>
    <property type="status" value="ALT_FRAME"/>
    <property type="molecule type" value="Genomic_DNA"/>
</dbReference>
<dbReference type="PIR" id="D70840">
    <property type="entry name" value="D70840"/>
</dbReference>
<dbReference type="SMR" id="P9WGG0"/>
<dbReference type="KEGG" id="mtc:MT0122"/>
<dbReference type="HOGENOM" id="CLU_066606_0_0_11"/>
<dbReference type="UniPathway" id="UPA00041">
    <property type="reaction ID" value="UER00436"/>
</dbReference>
<dbReference type="Proteomes" id="UP000001020">
    <property type="component" value="Chromosome"/>
</dbReference>
<dbReference type="GO" id="GO:0005737">
    <property type="term" value="C:cytoplasm"/>
    <property type="evidence" value="ECO:0007669"/>
    <property type="project" value="UniProtKB-SubCell"/>
</dbReference>
<dbReference type="GO" id="GO:0097367">
    <property type="term" value="F:carbohydrate derivative binding"/>
    <property type="evidence" value="ECO:0007669"/>
    <property type="project" value="InterPro"/>
</dbReference>
<dbReference type="GO" id="GO:0008968">
    <property type="term" value="F:D-sedoheptulose 7-phosphate isomerase activity"/>
    <property type="evidence" value="ECO:0007669"/>
    <property type="project" value="UniProtKB-UniRule"/>
</dbReference>
<dbReference type="GO" id="GO:0008270">
    <property type="term" value="F:zinc ion binding"/>
    <property type="evidence" value="ECO:0007669"/>
    <property type="project" value="UniProtKB-UniRule"/>
</dbReference>
<dbReference type="GO" id="GO:0005975">
    <property type="term" value="P:carbohydrate metabolic process"/>
    <property type="evidence" value="ECO:0007669"/>
    <property type="project" value="UniProtKB-UniRule"/>
</dbReference>
<dbReference type="GO" id="GO:2001061">
    <property type="term" value="P:D-glycero-D-manno-heptose 7-phosphate biosynthetic process"/>
    <property type="evidence" value="ECO:0007669"/>
    <property type="project" value="UniProtKB-UniPathway"/>
</dbReference>
<dbReference type="CDD" id="cd05006">
    <property type="entry name" value="SIS_GmhA"/>
    <property type="match status" value="1"/>
</dbReference>
<dbReference type="Gene3D" id="3.40.50.10490">
    <property type="entry name" value="Glucose-6-phosphate isomerase like protein, domain 1"/>
    <property type="match status" value="1"/>
</dbReference>
<dbReference type="HAMAP" id="MF_00067">
    <property type="entry name" value="GmhA"/>
    <property type="match status" value="1"/>
</dbReference>
<dbReference type="InterPro" id="IPR035461">
    <property type="entry name" value="GmhA/DiaA"/>
</dbReference>
<dbReference type="InterPro" id="IPR004515">
    <property type="entry name" value="Phosphoheptose_Isoase"/>
</dbReference>
<dbReference type="InterPro" id="IPR001347">
    <property type="entry name" value="SIS_dom"/>
</dbReference>
<dbReference type="InterPro" id="IPR046348">
    <property type="entry name" value="SIS_dom_sf"/>
</dbReference>
<dbReference type="InterPro" id="IPR050099">
    <property type="entry name" value="SIS_GmhA/DiaA_subfam"/>
</dbReference>
<dbReference type="NCBIfam" id="NF010547">
    <property type="entry name" value="PRK13938.1"/>
    <property type="match status" value="1"/>
</dbReference>
<dbReference type="PANTHER" id="PTHR30390:SF6">
    <property type="entry name" value="DNAA INITIATOR-ASSOCIATING PROTEIN DIAA"/>
    <property type="match status" value="1"/>
</dbReference>
<dbReference type="PANTHER" id="PTHR30390">
    <property type="entry name" value="SEDOHEPTULOSE 7-PHOSPHATE ISOMERASE / DNAA INITIATOR-ASSOCIATING FACTOR FOR REPLICATION INITIATION"/>
    <property type="match status" value="1"/>
</dbReference>
<dbReference type="Pfam" id="PF13580">
    <property type="entry name" value="SIS_2"/>
    <property type="match status" value="1"/>
</dbReference>
<dbReference type="SUPFAM" id="SSF53697">
    <property type="entry name" value="SIS domain"/>
    <property type="match status" value="1"/>
</dbReference>
<dbReference type="PROSITE" id="PS51464">
    <property type="entry name" value="SIS"/>
    <property type="match status" value="1"/>
</dbReference>
<reference key="1">
    <citation type="journal article" date="2002" name="J. Bacteriol.">
        <title>Whole-genome comparison of Mycobacterium tuberculosis clinical and laboratory strains.</title>
        <authorList>
            <person name="Fleischmann R.D."/>
            <person name="Alland D."/>
            <person name="Eisen J.A."/>
            <person name="Carpenter L."/>
            <person name="White O."/>
            <person name="Peterson J.D."/>
            <person name="DeBoy R.T."/>
            <person name="Dodson R.J."/>
            <person name="Gwinn M.L."/>
            <person name="Haft D.H."/>
            <person name="Hickey E.K."/>
            <person name="Kolonay J.F."/>
            <person name="Nelson W.C."/>
            <person name="Umayam L.A."/>
            <person name="Ermolaeva M.D."/>
            <person name="Salzberg S.L."/>
            <person name="Delcher A."/>
            <person name="Utterback T.R."/>
            <person name="Weidman J.F."/>
            <person name="Khouri H.M."/>
            <person name="Gill J."/>
            <person name="Mikula A."/>
            <person name="Bishai W."/>
            <person name="Jacobs W.R. Jr."/>
            <person name="Venter J.C."/>
            <person name="Fraser C.M."/>
        </authorList>
    </citation>
    <scope>NUCLEOTIDE SEQUENCE [LARGE SCALE GENOMIC DNA]</scope>
    <source>
        <strain>CDC 1551 / Oshkosh</strain>
    </source>
</reference>
<accession>P9WGG0</accession>
<accession>L0T4C6</accession>
<accession>O53635</accession>
<accession>P0A604</accession>
<evidence type="ECO:0000255" key="1">
    <source>
        <dbReference type="HAMAP-Rule" id="MF_00067"/>
    </source>
</evidence>
<evidence type="ECO:0000305" key="2"/>
<gene>
    <name evidence="1" type="primary">gmhA</name>
    <name type="synonym">lpcA</name>
    <name type="ordered locus">MT0122</name>
</gene>
<proteinExistence type="inferred from homology"/>
<protein>
    <recommendedName>
        <fullName evidence="1">Phosphoheptose isomerase</fullName>
        <ecNumber evidence="1">5.3.1.28</ecNumber>
    </recommendedName>
    <alternativeName>
        <fullName evidence="1">Sedoheptulose 7-phosphate isomerase</fullName>
    </alternativeName>
</protein>
<organism>
    <name type="scientific">Mycobacterium tuberculosis (strain CDC 1551 / Oshkosh)</name>
    <dbReference type="NCBI Taxonomy" id="83331"/>
    <lineage>
        <taxon>Bacteria</taxon>
        <taxon>Bacillati</taxon>
        <taxon>Actinomycetota</taxon>
        <taxon>Actinomycetes</taxon>
        <taxon>Mycobacteriales</taxon>
        <taxon>Mycobacteriaceae</taxon>
        <taxon>Mycobacterium</taxon>
        <taxon>Mycobacterium tuberculosis complex</taxon>
    </lineage>
</organism>
<name>GMHA_MYCTO</name>
<comment type="function">
    <text evidence="1">Catalyzes the isomerization of sedoheptulose 7-phosphate in D-glycero-D-manno-heptose 7-phosphate.</text>
</comment>
<comment type="catalytic activity">
    <reaction evidence="1">
        <text>2 D-sedoheptulose 7-phosphate = D-glycero-alpha-D-manno-heptose 7-phosphate + D-glycero-beta-D-manno-heptose 7-phosphate</text>
        <dbReference type="Rhea" id="RHEA:27489"/>
        <dbReference type="ChEBI" id="CHEBI:57483"/>
        <dbReference type="ChEBI" id="CHEBI:60203"/>
        <dbReference type="ChEBI" id="CHEBI:60204"/>
        <dbReference type="EC" id="5.3.1.28"/>
    </reaction>
</comment>
<comment type="cofactor">
    <cofactor evidence="1">
        <name>Zn(2+)</name>
        <dbReference type="ChEBI" id="CHEBI:29105"/>
    </cofactor>
    <text evidence="1">Binds 1 zinc ion per subunit.</text>
</comment>
<comment type="pathway">
    <text evidence="1">Carbohydrate biosynthesis; D-glycero-D-manno-heptose 7-phosphate biosynthesis; D-glycero-alpha-D-manno-heptose 7-phosphate and D-glycero-beta-D-manno-heptose 7-phosphate from sedoheptulose 7-phosphate: step 1/1.</text>
</comment>
<comment type="subcellular location">
    <subcellularLocation>
        <location evidence="1">Cytoplasm</location>
    </subcellularLocation>
</comment>
<comment type="miscellaneous">
    <text evidence="1">The reaction produces a racemic mixture of D-glycero-alpha-D-manno-heptose 7-phosphate and D-glycero-beta-D-manno-heptose 7-phosphate.</text>
</comment>
<comment type="similarity">
    <text evidence="1">Belongs to the SIS family. GmhA subfamily.</text>
</comment>
<comment type="sequence caution" evidence="2">
    <conflict type="frameshift">
        <sequence resource="EMBL-CDS" id="AAK44345"/>
    </conflict>
    <text>Fuses together gmhA and gmhB.</text>
</comment>
<keyword id="KW-0119">Carbohydrate metabolism</keyword>
<keyword id="KW-0963">Cytoplasm</keyword>
<keyword id="KW-0413">Isomerase</keyword>
<keyword id="KW-0479">Metal-binding</keyword>
<keyword id="KW-1185">Reference proteome</keyword>
<keyword id="KW-0862">Zinc</keyword>
<feature type="chain" id="PRO_0000428368" description="Phosphoheptose isomerase">
    <location>
        <begin position="1"/>
        <end position="196"/>
    </location>
</feature>
<feature type="domain" description="SIS" evidence="1">
    <location>
        <begin position="38"/>
        <end position="196"/>
    </location>
</feature>
<feature type="binding site" evidence="1">
    <location>
        <begin position="53"/>
        <end position="55"/>
    </location>
    <ligand>
        <name>substrate</name>
    </ligand>
</feature>
<feature type="binding site" evidence="1">
    <location>
        <position position="62"/>
    </location>
    <ligand>
        <name>Zn(2+)</name>
        <dbReference type="ChEBI" id="CHEBI:29105"/>
    </ligand>
</feature>
<feature type="binding site" evidence="1">
    <location>
        <position position="66"/>
    </location>
    <ligand>
        <name>substrate</name>
    </ligand>
</feature>
<feature type="binding site" evidence="1">
    <location>
        <position position="66"/>
    </location>
    <ligand>
        <name>Zn(2+)</name>
        <dbReference type="ChEBI" id="CHEBI:29105"/>
    </ligand>
</feature>
<feature type="binding site" evidence="1">
    <location>
        <begin position="95"/>
        <end position="96"/>
    </location>
    <ligand>
        <name>substrate</name>
    </ligand>
</feature>
<feature type="binding site" evidence="1">
    <location>
        <begin position="121"/>
        <end position="123"/>
    </location>
    <ligand>
        <name>substrate</name>
    </ligand>
</feature>
<feature type="binding site" evidence="1">
    <location>
        <position position="126"/>
    </location>
    <ligand>
        <name>substrate</name>
    </ligand>
</feature>
<feature type="binding site" evidence="1">
    <location>
        <position position="173"/>
    </location>
    <ligand>
        <name>substrate</name>
    </ligand>
</feature>
<feature type="binding site" evidence="1">
    <location>
        <position position="173"/>
    </location>
    <ligand>
        <name>Zn(2+)</name>
        <dbReference type="ChEBI" id="CHEBI:29105"/>
    </ligand>
</feature>
<feature type="binding site" evidence="1">
    <location>
        <position position="181"/>
    </location>
    <ligand>
        <name>Zn(2+)</name>
        <dbReference type="ChEBI" id="CHEBI:29105"/>
    </ligand>
</feature>